<accession>P24458</accession>
<name>CP52E_CANMA</name>
<gene>
    <name type="primary">CYP52A3-B</name>
</gene>
<comment type="function">
    <text>Together with an NADPH cytochrome P450 the enzyme system catalyzes the terminal hydroxylation as the first step in the assimilation of alkanes and fatty acids.</text>
</comment>
<comment type="cofactor">
    <cofactor evidence="1">
        <name>heme</name>
        <dbReference type="ChEBI" id="CHEBI:30413"/>
    </cofactor>
</comment>
<comment type="subcellular location">
    <subcellularLocation>
        <location evidence="4">Membrane</location>
    </subcellularLocation>
    <subcellularLocation>
        <location>Membrane</location>
        <topology>Single-pass membrane protein</topology>
    </subcellularLocation>
</comment>
<comment type="induction">
    <text evidence="3">By alkanes.</text>
</comment>
<comment type="similarity">
    <text evidence="4">Belongs to the cytochrome P450 family.</text>
</comment>
<protein>
    <recommendedName>
        <fullName>Cytochrome P450 52A3-B</fullName>
        <shortName>CYP52A3-B</shortName>
        <ecNumber>1.14.14.-</ecNumber>
    </recommendedName>
    <alternativeName>
        <fullName>Alkane-inducible P450-ALK1-B</fullName>
    </alternativeName>
    <alternativeName>
        <fullName>CYPLIIA3</fullName>
    </alternativeName>
</protein>
<keyword id="KW-0903">Direct protein sequencing</keyword>
<keyword id="KW-0349">Heme</keyword>
<keyword id="KW-0408">Iron</keyword>
<keyword id="KW-0472">Membrane</keyword>
<keyword id="KW-0479">Metal-binding</keyword>
<keyword id="KW-0503">Monooxygenase</keyword>
<keyword id="KW-0560">Oxidoreductase</keyword>
<keyword id="KW-0812">Transmembrane</keyword>
<keyword id="KW-1133">Transmembrane helix</keyword>
<sequence>MAIEQIIEEVLPYLTKWYTILFGAAFTYFLSIALRNKYYEYKLKCENPPYFKTAGFVGIPGLIDVIKAKNAGKLADYADQTFDEYPHHSFYMTVAGMLKIVLTVDPENIKAVLATQFNDFALGARHAHFDPLLGDGIFTLDGEGWKHSRAMLRPQFAREQIAHVKALEPHVQVLAKQIKLNKGETFDLQELFFRFTVDTATEFLFGESVHSLYDEKLGVPPPNNIPGRENFAKAFNTSQHYLATRTYSQMFYFLTNPKEFRDCNAKVHKLAQYFVNKALDASEDEVAEKSKGGYVFLYELVKQTRDPKVLQDQLLNIMVAGRDTTAGLLSFAMFELARNPKIWNKLREEIEVNFGLGEEARVDEISFETLKKCEYLKAVLNETLRMYPSVPVNFRTATRDTTLPRGGGKDGTSPIFVPKGSSVVYTVYKTHRLEEYYGKDAYEFRPERWFEPSTRKLGWAYVPFNGGPRICLGQQFALTEASYVITRLAQMFEHLESKDETYPPNKCIHLTMNHNEGVFISAK</sequence>
<evidence type="ECO:0000250" key="1"/>
<evidence type="ECO:0000255" key="2"/>
<evidence type="ECO:0000269" key="3">
    <source ref="2"/>
</evidence>
<evidence type="ECO:0000305" key="4"/>
<reference key="1">
    <citation type="journal article" date="1991" name="Agric. Biol. Chem.">
        <title>Evidence that more than one gene encodes n-alkane-inducible cytochrome P-450s in Candida maltosa, found by two-step gene disruption.</title>
        <authorList>
            <person name="Ohkuma M."/>
            <person name="Hikiji T."/>
            <person name="Tanimoto T."/>
            <person name="Schunck W.-H."/>
            <person name="Mueller H.G."/>
            <person name="Yano K."/>
            <person name="Takagi M."/>
        </authorList>
    </citation>
    <scope>NUCLEOTIDE SEQUENCE [GENOMIC DNA]</scope>
    <source>
        <strain>ATCC 28140 / CBS 5611 / IAM 12247 / JCM 1504 / NBRC 1977</strain>
    </source>
</reference>
<reference key="2">
    <citation type="journal article" date="1989" name="Agric. Biol. Chem.">
        <title>Purification of cytochrome P-450alk from n-alkane-grown cells of Candida maltosa, and cloning and nucleotide sequencing of the encoding gene.</title>
        <authorList>
            <person name="Takagi M."/>
            <person name="Ohkuma M."/>
            <person name="Kobayashi N."/>
            <person name="Watanabe M."/>
            <person name="Yano K."/>
        </authorList>
    </citation>
    <scope>PROTEIN SEQUENCE OF 2-13</scope>
    <scope>INDUCTION</scope>
    <source>
        <strain>ATCC 28140 / CBS 5611 / IAM 12247 / JCM 1504 / NBRC 1977</strain>
    </source>
</reference>
<organism>
    <name type="scientific">Candida maltosa</name>
    <name type="common">Yeast</name>
    <dbReference type="NCBI Taxonomy" id="5479"/>
    <lineage>
        <taxon>Eukaryota</taxon>
        <taxon>Fungi</taxon>
        <taxon>Dikarya</taxon>
        <taxon>Ascomycota</taxon>
        <taxon>Saccharomycotina</taxon>
        <taxon>Pichiomycetes</taxon>
        <taxon>Debaryomycetaceae</taxon>
        <taxon>Candida/Lodderomyces clade</taxon>
        <taxon>Candida</taxon>
    </lineage>
</organism>
<feature type="initiator methionine" description="Removed" evidence="3">
    <location>
        <position position="1"/>
    </location>
</feature>
<feature type="chain" id="PRO_0000052023" description="Cytochrome P450 52A3-B">
    <location>
        <begin position="2"/>
        <end position="523"/>
    </location>
</feature>
<feature type="transmembrane region" description="Helical" evidence="2">
    <location>
        <begin position="17"/>
        <end position="34"/>
    </location>
</feature>
<feature type="binding site" description="axial binding residue" evidence="1">
    <location>
        <position position="471"/>
    </location>
    <ligand>
        <name>heme</name>
        <dbReference type="ChEBI" id="CHEBI:30413"/>
    </ligand>
    <ligandPart>
        <name>Fe</name>
        <dbReference type="ChEBI" id="CHEBI:18248"/>
    </ligandPart>
</feature>
<dbReference type="EC" id="1.14.14.-"/>
<dbReference type="EMBL" id="D12475">
    <property type="protein sequence ID" value="BAA02041.1"/>
    <property type="molecule type" value="Genomic_DNA"/>
</dbReference>
<dbReference type="EMBL" id="S77461">
    <property type="protein sequence ID" value="AAC60531.1"/>
    <property type="molecule type" value="Genomic_DNA"/>
</dbReference>
<dbReference type="PIR" id="JQ1039">
    <property type="entry name" value="JQ1039"/>
</dbReference>
<dbReference type="SMR" id="P24458"/>
<dbReference type="GO" id="GO:0016020">
    <property type="term" value="C:membrane"/>
    <property type="evidence" value="ECO:0007669"/>
    <property type="project" value="UniProtKB-SubCell"/>
</dbReference>
<dbReference type="GO" id="GO:0020037">
    <property type="term" value="F:heme binding"/>
    <property type="evidence" value="ECO:0007669"/>
    <property type="project" value="InterPro"/>
</dbReference>
<dbReference type="GO" id="GO:0005506">
    <property type="term" value="F:iron ion binding"/>
    <property type="evidence" value="ECO:0007669"/>
    <property type="project" value="InterPro"/>
</dbReference>
<dbReference type="GO" id="GO:0016712">
    <property type="term" value="F:oxidoreductase activity, acting on paired donors, with incorporation or reduction of molecular oxygen, reduced flavin or flavoprotein as one donor, and incorporation of one atom of oxygen"/>
    <property type="evidence" value="ECO:0007669"/>
    <property type="project" value="InterPro"/>
</dbReference>
<dbReference type="CDD" id="cd11063">
    <property type="entry name" value="CYP52"/>
    <property type="match status" value="1"/>
</dbReference>
<dbReference type="Gene3D" id="1.10.630.10">
    <property type="entry name" value="Cytochrome P450"/>
    <property type="match status" value="1"/>
</dbReference>
<dbReference type="InterPro" id="IPR001128">
    <property type="entry name" value="Cyt_P450"/>
</dbReference>
<dbReference type="InterPro" id="IPR017972">
    <property type="entry name" value="Cyt_P450_CS"/>
</dbReference>
<dbReference type="InterPro" id="IPR002974">
    <property type="entry name" value="Cyt_P450_E_CYP52_ascomycetes"/>
</dbReference>
<dbReference type="InterPro" id="IPR047146">
    <property type="entry name" value="Cyt_P450_E_CYP52_fungi"/>
</dbReference>
<dbReference type="InterPro" id="IPR002402">
    <property type="entry name" value="Cyt_P450_E_grp-II"/>
</dbReference>
<dbReference type="InterPro" id="IPR036396">
    <property type="entry name" value="Cyt_P450_sf"/>
</dbReference>
<dbReference type="PANTHER" id="PTHR24287">
    <property type="entry name" value="P450, PUTATIVE (EUROFUNG)-RELATED"/>
    <property type="match status" value="1"/>
</dbReference>
<dbReference type="PANTHER" id="PTHR24287:SF1">
    <property type="entry name" value="P450, PUTATIVE (EUROFUNG)-RELATED"/>
    <property type="match status" value="1"/>
</dbReference>
<dbReference type="Pfam" id="PF00067">
    <property type="entry name" value="p450"/>
    <property type="match status" value="1"/>
</dbReference>
<dbReference type="PRINTS" id="PR00464">
    <property type="entry name" value="EP450II"/>
</dbReference>
<dbReference type="PRINTS" id="PR01239">
    <property type="entry name" value="EP450IICYP52"/>
</dbReference>
<dbReference type="PRINTS" id="PR00385">
    <property type="entry name" value="P450"/>
</dbReference>
<dbReference type="SUPFAM" id="SSF48264">
    <property type="entry name" value="Cytochrome P450"/>
    <property type="match status" value="1"/>
</dbReference>
<dbReference type="PROSITE" id="PS00086">
    <property type="entry name" value="CYTOCHROME_P450"/>
    <property type="match status" value="1"/>
</dbReference>
<proteinExistence type="evidence at protein level"/>